<gene>
    <name evidence="4" type="primary">ORC6</name>
    <name evidence="4" type="ordered locus">LOC_Os07g43540</name>
    <name evidence="4" type="ordered locus">Os07g0628600</name>
    <name evidence="7" type="ORF">OsJ_25222</name>
    <name evidence="5" type="ORF">P0011H09.106</name>
    <name evidence="6" type="ORF">P0506F02.120</name>
</gene>
<organism evidence="8">
    <name type="scientific">Oryza sativa subsp. japonica</name>
    <name type="common">Rice</name>
    <dbReference type="NCBI Taxonomy" id="39947"/>
    <lineage>
        <taxon>Eukaryota</taxon>
        <taxon>Viridiplantae</taxon>
        <taxon>Streptophyta</taxon>
        <taxon>Embryophyta</taxon>
        <taxon>Tracheophyta</taxon>
        <taxon>Spermatophyta</taxon>
        <taxon>Magnoliopsida</taxon>
        <taxon>Liliopsida</taxon>
        <taxon>Poales</taxon>
        <taxon>Poaceae</taxon>
        <taxon>BOP clade</taxon>
        <taxon>Oryzoideae</taxon>
        <taxon>Oryzeae</taxon>
        <taxon>Oryzinae</taxon>
        <taxon>Oryza</taxon>
        <taxon>Oryza sativa</taxon>
    </lineage>
</organism>
<reference key="1">
    <citation type="journal article" date="2005" name="Nature">
        <title>The map-based sequence of the rice genome.</title>
        <authorList>
            <consortium name="International rice genome sequencing project (IRGSP)"/>
        </authorList>
    </citation>
    <scope>NUCLEOTIDE SEQUENCE [LARGE SCALE GENOMIC DNA]</scope>
    <source>
        <strain>cv. Nipponbare</strain>
    </source>
</reference>
<reference key="2">
    <citation type="journal article" date="2008" name="Nucleic Acids Res.">
        <title>The rice annotation project database (RAP-DB): 2008 update.</title>
        <authorList>
            <consortium name="The rice annotation project (RAP)"/>
        </authorList>
    </citation>
    <scope>GENOME REANNOTATION</scope>
    <source>
        <strain>cv. Nipponbare</strain>
    </source>
</reference>
<reference key="3">
    <citation type="journal article" date="2013" name="Rice">
        <title>Improvement of the Oryza sativa Nipponbare reference genome using next generation sequence and optical map data.</title>
        <authorList>
            <person name="Kawahara Y."/>
            <person name="de la Bastide M."/>
            <person name="Hamilton J.P."/>
            <person name="Kanamori H."/>
            <person name="McCombie W.R."/>
            <person name="Ouyang S."/>
            <person name="Schwartz D.C."/>
            <person name="Tanaka T."/>
            <person name="Wu J."/>
            <person name="Zhou S."/>
            <person name="Childs K.L."/>
            <person name="Davidson R.M."/>
            <person name="Lin H."/>
            <person name="Quesada-Ocampo L."/>
            <person name="Vaillancourt B."/>
            <person name="Sakai H."/>
            <person name="Lee S.S."/>
            <person name="Kim J."/>
            <person name="Numa H."/>
            <person name="Itoh T."/>
            <person name="Buell C.R."/>
            <person name="Matsumoto T."/>
        </authorList>
    </citation>
    <scope>GENOME REANNOTATION</scope>
    <source>
        <strain>cv. Nipponbare</strain>
    </source>
</reference>
<reference key="4">
    <citation type="journal article" date="2005" name="PLoS Biol.">
        <title>The genomes of Oryza sativa: a history of duplications.</title>
        <authorList>
            <person name="Yu J."/>
            <person name="Wang J."/>
            <person name="Lin W."/>
            <person name="Li S."/>
            <person name="Li H."/>
            <person name="Zhou J."/>
            <person name="Ni P."/>
            <person name="Dong W."/>
            <person name="Hu S."/>
            <person name="Zeng C."/>
            <person name="Zhang J."/>
            <person name="Zhang Y."/>
            <person name="Li R."/>
            <person name="Xu Z."/>
            <person name="Li S."/>
            <person name="Li X."/>
            <person name="Zheng H."/>
            <person name="Cong L."/>
            <person name="Lin L."/>
            <person name="Yin J."/>
            <person name="Geng J."/>
            <person name="Li G."/>
            <person name="Shi J."/>
            <person name="Liu J."/>
            <person name="Lv H."/>
            <person name="Li J."/>
            <person name="Wang J."/>
            <person name="Deng Y."/>
            <person name="Ran L."/>
            <person name="Shi X."/>
            <person name="Wang X."/>
            <person name="Wu Q."/>
            <person name="Li C."/>
            <person name="Ren X."/>
            <person name="Wang J."/>
            <person name="Wang X."/>
            <person name="Li D."/>
            <person name="Liu D."/>
            <person name="Zhang X."/>
            <person name="Ji Z."/>
            <person name="Zhao W."/>
            <person name="Sun Y."/>
            <person name="Zhang Z."/>
            <person name="Bao J."/>
            <person name="Han Y."/>
            <person name="Dong L."/>
            <person name="Ji J."/>
            <person name="Chen P."/>
            <person name="Wu S."/>
            <person name="Liu J."/>
            <person name="Xiao Y."/>
            <person name="Bu D."/>
            <person name="Tan J."/>
            <person name="Yang L."/>
            <person name="Ye C."/>
            <person name="Zhang J."/>
            <person name="Xu J."/>
            <person name="Zhou Y."/>
            <person name="Yu Y."/>
            <person name="Zhang B."/>
            <person name="Zhuang S."/>
            <person name="Wei H."/>
            <person name="Liu B."/>
            <person name="Lei M."/>
            <person name="Yu H."/>
            <person name="Li Y."/>
            <person name="Xu H."/>
            <person name="Wei S."/>
            <person name="He X."/>
            <person name="Fang L."/>
            <person name="Zhang Z."/>
            <person name="Zhang Y."/>
            <person name="Huang X."/>
            <person name="Su Z."/>
            <person name="Tong W."/>
            <person name="Li J."/>
            <person name="Tong Z."/>
            <person name="Li S."/>
            <person name="Ye J."/>
            <person name="Wang L."/>
            <person name="Fang L."/>
            <person name="Lei T."/>
            <person name="Chen C.-S."/>
            <person name="Chen H.-C."/>
            <person name="Xu Z."/>
            <person name="Li H."/>
            <person name="Huang H."/>
            <person name="Zhang F."/>
            <person name="Xu H."/>
            <person name="Li N."/>
            <person name="Zhao C."/>
            <person name="Li S."/>
            <person name="Dong L."/>
            <person name="Huang Y."/>
            <person name="Li L."/>
            <person name="Xi Y."/>
            <person name="Qi Q."/>
            <person name="Li W."/>
            <person name="Zhang B."/>
            <person name="Hu W."/>
            <person name="Zhang Y."/>
            <person name="Tian X."/>
            <person name="Jiao Y."/>
            <person name="Liang X."/>
            <person name="Jin J."/>
            <person name="Gao L."/>
            <person name="Zheng W."/>
            <person name="Hao B."/>
            <person name="Liu S.-M."/>
            <person name="Wang W."/>
            <person name="Yuan L."/>
            <person name="Cao M."/>
            <person name="McDermott J."/>
            <person name="Samudrala R."/>
            <person name="Wang J."/>
            <person name="Wong G.K.-S."/>
            <person name="Yang H."/>
        </authorList>
    </citation>
    <scope>NUCLEOTIDE SEQUENCE [LARGE SCALE GENOMIC DNA]</scope>
    <source>
        <strain>cv. Nipponbare</strain>
    </source>
</reference>
<reference key="5">
    <citation type="journal article" date="2007" name="Plant Physiol.">
        <title>Genome-wide analysis of the core DNA replication machinery in the higher plants Arabidopsis and rice.</title>
        <authorList>
            <person name="Shultz R.W."/>
            <person name="Tatineni V.M."/>
            <person name="Hanley-Bowdoin L."/>
            <person name="Thompson W.F."/>
        </authorList>
    </citation>
    <scope>REVIEW ON THE CORE DNA REPLICATION MACHINERY</scope>
</reference>
<sequence length="295" mass="32606">MDMSSIASRLGLSGSRPVVRKAAELRRLCDVTFDSSVLGIGEVCKAIICLEIAASKFQVIFDRAEAVRMSGMSEKAYIRSFNALQNGLGVKTTLDVRELGIQFGCVRLIPFVQKGLSLYKERFLAALPPSRRASTDFGRPVFTAAAFYLCAKRHKLKVDKLKLIDLCGTSSSEFTTVSTSMADLCFDVFGIAKEKKDAKSIKGSRELLDVLPSKRKHDDDSDSSGESSGDDQDELDLPTYKRHKKMEKEAYNDWKSSVLSNKQTKPDPAKPRKQAQLNFKKKPSDMALEVSSAAN</sequence>
<evidence type="ECO:0000250" key="1">
    <source>
        <dbReference type="UniProtKB" id="Q9Y5N6"/>
    </source>
</evidence>
<evidence type="ECO:0000250" key="2">
    <source>
        <dbReference type="UniProtKB" id="Q9ZVH3"/>
    </source>
</evidence>
<evidence type="ECO:0000256" key="3">
    <source>
        <dbReference type="SAM" id="MobiDB-lite"/>
    </source>
</evidence>
<evidence type="ECO:0000305" key="4"/>
<evidence type="ECO:0000312" key="5">
    <source>
        <dbReference type="EMBL" id="BAC20670.1"/>
    </source>
</evidence>
<evidence type="ECO:0000312" key="6">
    <source>
        <dbReference type="EMBL" id="BAC22351.1"/>
    </source>
</evidence>
<evidence type="ECO:0000312" key="7">
    <source>
        <dbReference type="EMBL" id="EAZ40750.1"/>
    </source>
</evidence>
<evidence type="ECO:0000312" key="8">
    <source>
        <dbReference type="Proteomes" id="UP000059680"/>
    </source>
</evidence>
<name>ORC6_ORYSJ</name>
<feature type="chain" id="PRO_0000431438" description="Origin of replication complex subunit 6">
    <location>
        <begin position="1"/>
        <end position="295"/>
    </location>
</feature>
<feature type="region of interest" description="Disordered" evidence="3">
    <location>
        <begin position="212"/>
        <end position="295"/>
    </location>
</feature>
<feature type="compositionally biased region" description="Acidic residues" evidence="3">
    <location>
        <begin position="220"/>
        <end position="236"/>
    </location>
</feature>
<feature type="compositionally biased region" description="Polar residues" evidence="3">
    <location>
        <begin position="254"/>
        <end position="263"/>
    </location>
</feature>
<accession>Q8GSL4</accession>
<accession>A0A0P0X8V6</accession>
<proteinExistence type="inferred from homology"/>
<protein>
    <recommendedName>
        <fullName evidence="4">Origin of replication complex subunit 6</fullName>
        <shortName evidence="4">OsORC6</shortName>
    </recommendedName>
</protein>
<comment type="function">
    <text evidence="1">Component of the origin recognition complex (ORC) that binds origins of replication. DNA-binding is ATP-dependent. The specific DNA sequences that define origins of replication have not been identified yet. ORC is required to assemble the pre-replication complex necessary to initiate DNA replication.</text>
</comment>
<comment type="subunit">
    <text evidence="2">Component of the origin recognition complex (ORC) composed of at least ORC1, ORC2, ORC3, ORC4, ORC5 and ORC6. ORC is regulated in a cell-cycle and development dependent manner. It is sequentially assembled at the exit from anaphase of mitosis and disassembled as cells enter S phase.</text>
</comment>
<comment type="subcellular location">
    <subcellularLocation>
        <location evidence="1">Nucleus</location>
    </subcellularLocation>
</comment>
<comment type="similarity">
    <text evidence="4">Belongs to the ORC6 family.</text>
</comment>
<dbReference type="EMBL" id="AP004260">
    <property type="protein sequence ID" value="BAC20670.1"/>
    <property type="molecule type" value="Genomic_DNA"/>
</dbReference>
<dbReference type="EMBL" id="AP004306">
    <property type="protein sequence ID" value="BAC22351.1"/>
    <property type="molecule type" value="Genomic_DNA"/>
</dbReference>
<dbReference type="EMBL" id="AP008213">
    <property type="protein sequence ID" value="BAF22265.1"/>
    <property type="molecule type" value="Genomic_DNA"/>
</dbReference>
<dbReference type="EMBL" id="AP014963">
    <property type="protein sequence ID" value="BAT02758.1"/>
    <property type="molecule type" value="Genomic_DNA"/>
</dbReference>
<dbReference type="EMBL" id="CM000144">
    <property type="protein sequence ID" value="EAZ40750.1"/>
    <property type="molecule type" value="Genomic_DNA"/>
</dbReference>
<dbReference type="RefSeq" id="XP_015645695.1">
    <property type="nucleotide sequence ID" value="XM_015790209.1"/>
</dbReference>
<dbReference type="SMR" id="Q8GSL4"/>
<dbReference type="FunCoup" id="Q8GSL4">
    <property type="interactions" value="195"/>
</dbReference>
<dbReference type="STRING" id="39947.Q8GSL4"/>
<dbReference type="PaxDb" id="39947-Q8GSL4"/>
<dbReference type="EnsemblPlants" id="Os07t0628600-00">
    <property type="protein sequence ID" value="Os07t0628600-00"/>
    <property type="gene ID" value="Os07g0628600"/>
</dbReference>
<dbReference type="Gramene" id="Os07t0628600-00">
    <property type="protein sequence ID" value="Os07t0628600-00"/>
    <property type="gene ID" value="Os07g0628600"/>
</dbReference>
<dbReference type="KEGG" id="dosa:Os07g0628600"/>
<dbReference type="eggNOG" id="KOG4557">
    <property type="taxonomic scope" value="Eukaryota"/>
</dbReference>
<dbReference type="HOGENOM" id="CLU_080569_0_0_1"/>
<dbReference type="InParanoid" id="Q8GSL4"/>
<dbReference type="OMA" id="RKSHYLN"/>
<dbReference type="OrthoDB" id="5552484at2759"/>
<dbReference type="PlantReactome" id="R-OSA-9640882">
    <property type="pathway name" value="Assembly of pre-replication complex"/>
</dbReference>
<dbReference type="PlantReactome" id="R-OSA-9645850">
    <property type="pathway name" value="Activation of pre-replication complex"/>
</dbReference>
<dbReference type="Proteomes" id="UP000000763">
    <property type="component" value="Chromosome 7"/>
</dbReference>
<dbReference type="Proteomes" id="UP000007752">
    <property type="component" value="Chromosome 7"/>
</dbReference>
<dbReference type="Proteomes" id="UP000059680">
    <property type="component" value="Chromosome 7"/>
</dbReference>
<dbReference type="GO" id="GO:0005664">
    <property type="term" value="C:nuclear origin of replication recognition complex"/>
    <property type="evidence" value="ECO:0000318"/>
    <property type="project" value="GO_Central"/>
</dbReference>
<dbReference type="GO" id="GO:0003677">
    <property type="term" value="F:DNA binding"/>
    <property type="evidence" value="ECO:0007669"/>
    <property type="project" value="UniProtKB-KW"/>
</dbReference>
<dbReference type="GO" id="GO:0006270">
    <property type="term" value="P:DNA replication initiation"/>
    <property type="evidence" value="ECO:0000318"/>
    <property type="project" value="GO_Central"/>
</dbReference>
<dbReference type="GO" id="GO:0009555">
    <property type="term" value="P:pollen development"/>
    <property type="evidence" value="ECO:0007669"/>
    <property type="project" value="EnsemblPlants"/>
</dbReference>
<dbReference type="CDD" id="cd11583">
    <property type="entry name" value="Orc6_mid"/>
    <property type="match status" value="1"/>
</dbReference>
<dbReference type="FunFam" id="1.10.472.10:FF:000062">
    <property type="entry name" value="Origin recognition complex subunit 6"/>
    <property type="match status" value="1"/>
</dbReference>
<dbReference type="Gene3D" id="1.10.472.10">
    <property type="entry name" value="Cyclin-like"/>
    <property type="match status" value="1"/>
</dbReference>
<dbReference type="InterPro" id="IPR054113">
    <property type="entry name" value="ORC6_cyclin-like_2nd"/>
</dbReference>
<dbReference type="InterPro" id="IPR008721">
    <property type="entry name" value="ORC6_cyclin_first"/>
</dbReference>
<dbReference type="InterPro" id="IPR020529">
    <property type="entry name" value="ORC6_met/pln"/>
</dbReference>
<dbReference type="PANTHER" id="PTHR13394">
    <property type="entry name" value="ORIGIN RECOGNITION COMPLEX SUBUNIT 6"/>
    <property type="match status" value="1"/>
</dbReference>
<dbReference type="PANTHER" id="PTHR13394:SF0">
    <property type="entry name" value="ORIGIN RECOGNITION COMPLEX SUBUNIT 6"/>
    <property type="match status" value="1"/>
</dbReference>
<dbReference type="Pfam" id="PF05460">
    <property type="entry name" value="ORC6"/>
    <property type="match status" value="1"/>
</dbReference>
<dbReference type="Pfam" id="PF21913">
    <property type="entry name" value="ORC6_2nd"/>
    <property type="match status" value="1"/>
</dbReference>
<keyword id="KW-0235">DNA replication</keyword>
<keyword id="KW-0238">DNA-binding</keyword>
<keyword id="KW-0539">Nucleus</keyword>
<keyword id="KW-1185">Reference proteome</keyword>